<feature type="signal peptide" evidence="2">
    <location>
        <begin position="1"/>
        <end position="19"/>
    </location>
</feature>
<feature type="chain" id="PRO_0000032841" description="Superoxide dismutase [Cu-Zn]">
    <location>
        <begin position="20"/>
        <end position="182"/>
    </location>
</feature>
<feature type="region of interest" description="Disordered" evidence="3">
    <location>
        <begin position="91"/>
        <end position="118"/>
    </location>
</feature>
<feature type="compositionally biased region" description="Basic and acidic residues" evidence="3">
    <location>
        <begin position="102"/>
        <end position="115"/>
    </location>
</feature>
<feature type="binding site" evidence="1">
    <location>
        <position position="69"/>
    </location>
    <ligand>
        <name>Cu cation</name>
        <dbReference type="ChEBI" id="CHEBI:23378"/>
        <note>catalytic</note>
    </ligand>
</feature>
<feature type="binding site" evidence="1">
    <location>
        <position position="71"/>
    </location>
    <ligand>
        <name>Cu cation</name>
        <dbReference type="ChEBI" id="CHEBI:23378"/>
        <note>catalytic</note>
    </ligand>
</feature>
<feature type="binding site" evidence="1">
    <location>
        <position position="95"/>
    </location>
    <ligand>
        <name>Cu cation</name>
        <dbReference type="ChEBI" id="CHEBI:23378"/>
        <note>catalytic</note>
    </ligand>
</feature>
<feature type="binding site" evidence="1">
    <location>
        <position position="95"/>
    </location>
    <ligand>
        <name>Zn(2+)</name>
        <dbReference type="ChEBI" id="CHEBI:29105"/>
        <note>structural</note>
    </ligand>
</feature>
<feature type="binding site" evidence="1">
    <location>
        <position position="104"/>
    </location>
    <ligand>
        <name>Zn(2+)</name>
        <dbReference type="ChEBI" id="CHEBI:29105"/>
        <note>structural</note>
    </ligand>
</feature>
<feature type="binding site" evidence="1">
    <location>
        <position position="115"/>
    </location>
    <ligand>
        <name>Zn(2+)</name>
        <dbReference type="ChEBI" id="CHEBI:29105"/>
        <note>structural</note>
    </ligand>
</feature>
<feature type="binding site" evidence="1">
    <location>
        <position position="118"/>
    </location>
    <ligand>
        <name>Zn(2+)</name>
        <dbReference type="ChEBI" id="CHEBI:29105"/>
        <note>structural</note>
    </ligand>
</feature>
<feature type="lipid moiety-binding region" description="N-palmitoyl cysteine" evidence="2">
    <location>
        <position position="20"/>
    </location>
</feature>
<feature type="lipid moiety-binding region" description="S-diacylglycerol cysteine" evidence="2">
    <location>
        <position position="20"/>
    </location>
</feature>
<feature type="disulfide bond" evidence="1">
    <location>
        <begin position="76"/>
        <end position="175"/>
    </location>
</feature>
<accession>Q9RU48</accession>
<evidence type="ECO:0000250" key="1"/>
<evidence type="ECO:0000255" key="2">
    <source>
        <dbReference type="PROSITE-ProRule" id="PRU00303"/>
    </source>
</evidence>
<evidence type="ECO:0000256" key="3">
    <source>
        <dbReference type="SAM" id="MobiDB-lite"/>
    </source>
</evidence>
<evidence type="ECO:0000305" key="4"/>
<dbReference type="EC" id="1.15.1.1"/>
<dbReference type="EMBL" id="AE000513">
    <property type="protein sequence ID" value="AAF11107.1"/>
    <property type="molecule type" value="Genomic_DNA"/>
</dbReference>
<dbReference type="PIR" id="B75383">
    <property type="entry name" value="B75383"/>
</dbReference>
<dbReference type="RefSeq" id="NP_295269.1">
    <property type="nucleotide sequence ID" value="NC_001263.1"/>
</dbReference>
<dbReference type="RefSeq" id="WP_010888185.1">
    <property type="nucleotide sequence ID" value="NC_001263.1"/>
</dbReference>
<dbReference type="SMR" id="Q9RU48"/>
<dbReference type="FunCoup" id="Q9RU48">
    <property type="interactions" value="141"/>
</dbReference>
<dbReference type="STRING" id="243230.DR_1546"/>
<dbReference type="PaxDb" id="243230-DR_1546"/>
<dbReference type="EnsemblBacteria" id="AAF11107">
    <property type="protein sequence ID" value="AAF11107"/>
    <property type="gene ID" value="DR_1546"/>
</dbReference>
<dbReference type="GeneID" id="69517784"/>
<dbReference type="KEGG" id="dra:DR_1546"/>
<dbReference type="PATRIC" id="fig|243230.17.peg.1748"/>
<dbReference type="eggNOG" id="COG2032">
    <property type="taxonomic scope" value="Bacteria"/>
</dbReference>
<dbReference type="HOGENOM" id="CLU_056632_8_1_0"/>
<dbReference type="InParanoid" id="Q9RU48"/>
<dbReference type="OrthoDB" id="9792957at2"/>
<dbReference type="Proteomes" id="UP000002524">
    <property type="component" value="Chromosome 1"/>
</dbReference>
<dbReference type="GO" id="GO:0005886">
    <property type="term" value="C:plasma membrane"/>
    <property type="evidence" value="ECO:0007669"/>
    <property type="project" value="UniProtKB-SubCell"/>
</dbReference>
<dbReference type="GO" id="GO:0005507">
    <property type="term" value="F:copper ion binding"/>
    <property type="evidence" value="ECO:0000318"/>
    <property type="project" value="GO_Central"/>
</dbReference>
<dbReference type="GO" id="GO:0004784">
    <property type="term" value="F:superoxide dismutase activity"/>
    <property type="evidence" value="ECO:0000318"/>
    <property type="project" value="GO_Central"/>
</dbReference>
<dbReference type="GO" id="GO:0019430">
    <property type="term" value="P:removal of superoxide radicals"/>
    <property type="evidence" value="ECO:0000318"/>
    <property type="project" value="GO_Central"/>
</dbReference>
<dbReference type="CDD" id="cd00305">
    <property type="entry name" value="Cu-Zn_Superoxide_Dismutase"/>
    <property type="match status" value="1"/>
</dbReference>
<dbReference type="FunFam" id="2.60.40.200:FF:000023">
    <property type="entry name" value="Superoxide dismutase [Cu-Zn]"/>
    <property type="match status" value="1"/>
</dbReference>
<dbReference type="Gene3D" id="2.60.40.200">
    <property type="entry name" value="Superoxide dismutase, copper/zinc binding domain"/>
    <property type="match status" value="1"/>
</dbReference>
<dbReference type="InterPro" id="IPR036423">
    <property type="entry name" value="SOD-like_Cu/Zn_dom_sf"/>
</dbReference>
<dbReference type="InterPro" id="IPR024134">
    <property type="entry name" value="SOD_Cu/Zn_/chaperone"/>
</dbReference>
<dbReference type="InterPro" id="IPR001424">
    <property type="entry name" value="SOD_Cu_Zn_dom"/>
</dbReference>
<dbReference type="PANTHER" id="PTHR10003">
    <property type="entry name" value="SUPEROXIDE DISMUTASE CU-ZN -RELATED"/>
    <property type="match status" value="1"/>
</dbReference>
<dbReference type="Pfam" id="PF00080">
    <property type="entry name" value="Sod_Cu"/>
    <property type="match status" value="1"/>
</dbReference>
<dbReference type="SUPFAM" id="SSF49329">
    <property type="entry name" value="Cu,Zn superoxide dismutase-like"/>
    <property type="match status" value="1"/>
</dbReference>
<dbReference type="PROSITE" id="PS51257">
    <property type="entry name" value="PROKAR_LIPOPROTEIN"/>
    <property type="match status" value="1"/>
</dbReference>
<name>SODC_DEIRA</name>
<gene>
    <name type="primary">sodC</name>
    <name type="ordered locus">DR_1546</name>
</gene>
<sequence>MFRTLTVVPLLALGLSLSACADLGQPTVRADLLDQTGKVTGTATFSPSPIGTRVSIEVSGLKAGPHGLHIHENPNCNPGPDAQGQTIPFGAAGGHFDPGASHNHDGPHARNDQGHGGDLPMITVGEDGKGRLNFDTNRLKMTGPTGVLGRSIVIHADADDYQTNPAGNSGGRERCGVFQAIN</sequence>
<reference key="1">
    <citation type="journal article" date="1999" name="Science">
        <title>Genome sequence of the radioresistant bacterium Deinococcus radiodurans R1.</title>
        <authorList>
            <person name="White O."/>
            <person name="Eisen J.A."/>
            <person name="Heidelberg J.F."/>
            <person name="Hickey E.K."/>
            <person name="Peterson J.D."/>
            <person name="Dodson R.J."/>
            <person name="Haft D.H."/>
            <person name="Gwinn M.L."/>
            <person name="Nelson W.C."/>
            <person name="Richardson D.L."/>
            <person name="Moffat K.S."/>
            <person name="Qin H."/>
            <person name="Jiang L."/>
            <person name="Pamphile W."/>
            <person name="Crosby M."/>
            <person name="Shen M."/>
            <person name="Vamathevan J.J."/>
            <person name="Lam P."/>
            <person name="McDonald L.A."/>
            <person name="Utterback T.R."/>
            <person name="Zalewski C."/>
            <person name="Makarova K.S."/>
            <person name="Aravind L."/>
            <person name="Daly M.J."/>
            <person name="Minton K.W."/>
            <person name="Fleischmann R.D."/>
            <person name="Ketchum K.A."/>
            <person name="Nelson K.E."/>
            <person name="Salzberg S.L."/>
            <person name="Smith H.O."/>
            <person name="Venter J.C."/>
            <person name="Fraser C.M."/>
        </authorList>
    </citation>
    <scope>NUCLEOTIDE SEQUENCE [LARGE SCALE GENOMIC DNA]</scope>
    <source>
        <strain>ATCC 13939 / DSM 20539 / JCM 16871 / CCUG 27074 / LMG 4051 / NBRC 15346 / NCIMB 9279 / VKM B-1422 / R1</strain>
    </source>
</reference>
<comment type="function">
    <text evidence="1">Destroys radicals which are normally produced within the cells and which are toxic to biological systems.</text>
</comment>
<comment type="catalytic activity">
    <reaction>
        <text>2 superoxide + 2 H(+) = H2O2 + O2</text>
        <dbReference type="Rhea" id="RHEA:20696"/>
        <dbReference type="ChEBI" id="CHEBI:15378"/>
        <dbReference type="ChEBI" id="CHEBI:15379"/>
        <dbReference type="ChEBI" id="CHEBI:16240"/>
        <dbReference type="ChEBI" id="CHEBI:18421"/>
        <dbReference type="EC" id="1.15.1.1"/>
    </reaction>
</comment>
<comment type="cofactor">
    <cofactor evidence="4">
        <name>Cu cation</name>
        <dbReference type="ChEBI" id="CHEBI:23378"/>
    </cofactor>
    <text evidence="4">Binds 1 copper ion per subunit.</text>
</comment>
<comment type="cofactor">
    <cofactor evidence="4">
        <name>Zn(2+)</name>
        <dbReference type="ChEBI" id="CHEBI:29105"/>
    </cofactor>
    <text evidence="4">Binds 1 zinc ion per subunit.</text>
</comment>
<comment type="subcellular location">
    <subcellularLocation>
        <location evidence="2">Cell membrane</location>
        <topology evidence="2">Lipid-anchor</topology>
    </subcellularLocation>
</comment>
<comment type="similarity">
    <text evidence="4">Belongs to the Cu-Zn superoxide dismutase family.</text>
</comment>
<comment type="caution">
    <text evidence="4">Lacks the last conserved histidine that binds copper.</text>
</comment>
<organism>
    <name type="scientific">Deinococcus radiodurans (strain ATCC 13939 / DSM 20539 / JCM 16871 / CCUG 27074 / LMG 4051 / NBRC 15346 / NCIMB 9279 / VKM B-1422 / R1)</name>
    <dbReference type="NCBI Taxonomy" id="243230"/>
    <lineage>
        <taxon>Bacteria</taxon>
        <taxon>Thermotogati</taxon>
        <taxon>Deinococcota</taxon>
        <taxon>Deinococci</taxon>
        <taxon>Deinococcales</taxon>
        <taxon>Deinococcaceae</taxon>
        <taxon>Deinococcus</taxon>
    </lineage>
</organism>
<keyword id="KW-0049">Antioxidant</keyword>
<keyword id="KW-1003">Cell membrane</keyword>
<keyword id="KW-0186">Copper</keyword>
<keyword id="KW-1015">Disulfide bond</keyword>
<keyword id="KW-0449">Lipoprotein</keyword>
<keyword id="KW-0472">Membrane</keyword>
<keyword id="KW-0479">Metal-binding</keyword>
<keyword id="KW-0560">Oxidoreductase</keyword>
<keyword id="KW-0564">Palmitate</keyword>
<keyword id="KW-1185">Reference proteome</keyword>
<keyword id="KW-0732">Signal</keyword>
<keyword id="KW-0862">Zinc</keyword>
<proteinExistence type="inferred from homology"/>
<protein>
    <recommendedName>
        <fullName>Superoxide dismutase [Cu-Zn]</fullName>
        <ecNumber>1.15.1.1</ecNumber>
    </recommendedName>
</protein>